<sequence>MCYQTSKKKRRSRKRRAQEEKEKMGKGVVSEKVKLVVALITLQFCFAGFHIVSRVALNIGVSKVVYPVYRNLLALLLIGPFAYFFEKKERPPLTISLLAQFFFLALIGITANQGFYLLGLYYATPTFASAMQNSVPAITFIMACALRLEHIDLVRKHGVAKVLGTLVSIGGATVITLYRGFPIFDQGLNMQKEEVVGSDNSHSLTLGWLYLMGHCLSWAGWMVLQAPVLKQYPAKLTLTSFTCFFGLIQFLVIALFVETDLNNWIIVSWEELFTILYAGIIASGLVVYLQTWCIYKSGPVFVAVFQPLQTLLVAAMAFLILGDQLYSGGIVGAVFIMLGLYLVLWGKNEERKLALEESQQDPESLTKHLLEAQHKKSNSESEV</sequence>
<evidence type="ECO:0000250" key="1"/>
<evidence type="ECO:0000255" key="2"/>
<evidence type="ECO:0000256" key="3">
    <source>
        <dbReference type="SAM" id="MobiDB-lite"/>
    </source>
</evidence>
<evidence type="ECO:0000305" key="4"/>
<dbReference type="EMBL" id="AB020749">
    <property type="protein sequence ID" value="BAB02033.1"/>
    <property type="molecule type" value="Genomic_DNA"/>
</dbReference>
<dbReference type="EMBL" id="CP002686">
    <property type="protein sequence ID" value="AEE76063.2"/>
    <property type="molecule type" value="Genomic_DNA"/>
</dbReference>
<dbReference type="EMBL" id="BX824196">
    <property type="status" value="NOT_ANNOTATED_CDS"/>
    <property type="molecule type" value="mRNA"/>
</dbReference>
<dbReference type="RefSeq" id="NP_188448.2">
    <molecule id="Q9LV20-1"/>
    <property type="nucleotide sequence ID" value="NM_112703.4"/>
</dbReference>
<dbReference type="SMR" id="Q9LV20"/>
<dbReference type="STRING" id="3702.Q9LV20"/>
<dbReference type="PaxDb" id="3702-AT3G18200.1"/>
<dbReference type="ProteomicsDB" id="243094">
    <molecule id="Q9LV20-1"/>
</dbReference>
<dbReference type="EnsemblPlants" id="AT3G18200.2">
    <molecule id="Q9LV20-1"/>
    <property type="protein sequence ID" value="AT3G18200.2"/>
    <property type="gene ID" value="AT3G18200"/>
</dbReference>
<dbReference type="Gramene" id="AT3G18200.2">
    <molecule id="Q9LV20-1"/>
    <property type="protein sequence ID" value="AT3G18200.2"/>
    <property type="gene ID" value="AT3G18200"/>
</dbReference>
<dbReference type="KEGG" id="ath:AT3G18200"/>
<dbReference type="Araport" id="AT3G18200"/>
<dbReference type="TAIR" id="AT3G18200">
    <property type="gene designation" value="UMAMIT4"/>
</dbReference>
<dbReference type="eggNOG" id="ENOG502QSV3">
    <property type="taxonomic scope" value="Eukaryota"/>
</dbReference>
<dbReference type="HOGENOM" id="CLU_025359_1_2_1"/>
<dbReference type="InParanoid" id="Q9LV20"/>
<dbReference type="OMA" id="QLCYAGF"/>
<dbReference type="PhylomeDB" id="Q9LV20"/>
<dbReference type="PRO" id="PR:Q9LV20"/>
<dbReference type="Proteomes" id="UP000006548">
    <property type="component" value="Chromosome 3"/>
</dbReference>
<dbReference type="ExpressionAtlas" id="Q9LV20">
    <property type="expression patterns" value="baseline and differential"/>
</dbReference>
<dbReference type="GO" id="GO:0016020">
    <property type="term" value="C:membrane"/>
    <property type="evidence" value="ECO:0007669"/>
    <property type="project" value="UniProtKB-SubCell"/>
</dbReference>
<dbReference type="GO" id="GO:0022857">
    <property type="term" value="F:transmembrane transporter activity"/>
    <property type="evidence" value="ECO:0007669"/>
    <property type="project" value="InterPro"/>
</dbReference>
<dbReference type="InterPro" id="IPR000620">
    <property type="entry name" value="EamA_dom"/>
</dbReference>
<dbReference type="InterPro" id="IPR030184">
    <property type="entry name" value="WAT1-related"/>
</dbReference>
<dbReference type="PANTHER" id="PTHR31218">
    <property type="entry name" value="WAT1-RELATED PROTEIN"/>
    <property type="match status" value="1"/>
</dbReference>
<dbReference type="Pfam" id="PF00892">
    <property type="entry name" value="EamA"/>
    <property type="match status" value="2"/>
</dbReference>
<dbReference type="SUPFAM" id="SSF103481">
    <property type="entry name" value="Multidrug resistance efflux transporter EmrE"/>
    <property type="match status" value="2"/>
</dbReference>
<reference key="1">
    <citation type="journal article" date="2000" name="DNA Res.">
        <title>Structural analysis of Arabidopsis thaliana chromosome 3. II. Sequence features of the 4,251,695 bp regions covered by 90 P1, TAC and BAC clones.</title>
        <authorList>
            <person name="Kaneko T."/>
            <person name="Katoh T."/>
            <person name="Sato S."/>
            <person name="Nakamura Y."/>
            <person name="Asamizu E."/>
            <person name="Tabata S."/>
        </authorList>
    </citation>
    <scope>NUCLEOTIDE SEQUENCE [LARGE SCALE GENOMIC DNA]</scope>
    <source>
        <strain>cv. Columbia</strain>
    </source>
</reference>
<reference key="2">
    <citation type="journal article" date="2017" name="Plant J.">
        <title>Araport11: a complete reannotation of the Arabidopsis thaliana reference genome.</title>
        <authorList>
            <person name="Cheng C.Y."/>
            <person name="Krishnakumar V."/>
            <person name="Chan A.P."/>
            <person name="Thibaud-Nissen F."/>
            <person name="Schobel S."/>
            <person name="Town C.D."/>
        </authorList>
    </citation>
    <scope>GENOME REANNOTATION</scope>
    <source>
        <strain>cv. Columbia</strain>
    </source>
</reference>
<reference key="3">
    <citation type="journal article" date="2004" name="Genome Res.">
        <title>Whole genome sequence comparisons and 'full-length' cDNA sequences: a combined approach to evaluate and improve Arabidopsis genome annotation.</title>
        <authorList>
            <person name="Castelli V."/>
            <person name="Aury J.-M."/>
            <person name="Jaillon O."/>
            <person name="Wincker P."/>
            <person name="Clepet C."/>
            <person name="Menard M."/>
            <person name="Cruaud C."/>
            <person name="Quetier F."/>
            <person name="Scarpelli C."/>
            <person name="Schaechter V."/>
            <person name="Temple G."/>
            <person name="Caboche M."/>
            <person name="Weissenbach J."/>
            <person name="Salanoubat M."/>
        </authorList>
    </citation>
    <scope>NUCLEOTIDE SEQUENCE [LARGE SCALE MRNA] OF 14-383</scope>
    <source>
        <strain>cv. Columbia</strain>
    </source>
</reference>
<organism>
    <name type="scientific">Arabidopsis thaliana</name>
    <name type="common">Mouse-ear cress</name>
    <dbReference type="NCBI Taxonomy" id="3702"/>
    <lineage>
        <taxon>Eukaryota</taxon>
        <taxon>Viridiplantae</taxon>
        <taxon>Streptophyta</taxon>
        <taxon>Embryophyta</taxon>
        <taxon>Tracheophyta</taxon>
        <taxon>Spermatophyta</taxon>
        <taxon>Magnoliopsida</taxon>
        <taxon>eudicotyledons</taxon>
        <taxon>Gunneridae</taxon>
        <taxon>Pentapetalae</taxon>
        <taxon>rosids</taxon>
        <taxon>malvids</taxon>
        <taxon>Brassicales</taxon>
        <taxon>Brassicaceae</taxon>
        <taxon>Camelineae</taxon>
        <taxon>Arabidopsis</taxon>
    </lineage>
</organism>
<accession>Q9LV20</accession>
<accession>F4J7L0</accession>
<accession>F4J7L1</accession>
<feature type="chain" id="PRO_0000421325" description="WAT1-related protein At3g18200">
    <location>
        <begin position="1"/>
        <end position="383"/>
    </location>
</feature>
<feature type="transmembrane region" description="Helical" evidence="2">
    <location>
        <begin position="33"/>
        <end position="53"/>
    </location>
</feature>
<feature type="transmembrane region" description="Helical" evidence="2">
    <location>
        <begin position="65"/>
        <end position="85"/>
    </location>
</feature>
<feature type="transmembrane region" description="Helical" evidence="2">
    <location>
        <begin position="91"/>
        <end position="111"/>
    </location>
</feature>
<feature type="transmembrane region" description="Helical" evidence="2">
    <location>
        <begin position="126"/>
        <end position="146"/>
    </location>
</feature>
<feature type="transmembrane region" description="Helical" evidence="2">
    <location>
        <begin position="158"/>
        <end position="178"/>
    </location>
</feature>
<feature type="transmembrane region" description="Helical" evidence="2">
    <location>
        <begin position="204"/>
        <end position="224"/>
    </location>
</feature>
<feature type="transmembrane region" description="Helical" evidence="2">
    <location>
        <begin position="237"/>
        <end position="257"/>
    </location>
</feature>
<feature type="transmembrane region" description="Helical" evidence="2">
    <location>
        <begin position="272"/>
        <end position="292"/>
    </location>
</feature>
<feature type="transmembrane region" description="Helical" evidence="2">
    <location>
        <begin position="300"/>
        <end position="320"/>
    </location>
</feature>
<feature type="transmembrane region" description="Helical" evidence="2">
    <location>
        <begin position="325"/>
        <end position="345"/>
    </location>
</feature>
<feature type="domain" description="EamA 1">
    <location>
        <begin position="44"/>
        <end position="173"/>
    </location>
</feature>
<feature type="domain" description="EamA 2">
    <location>
        <begin position="216"/>
        <end position="344"/>
    </location>
</feature>
<feature type="region of interest" description="Disordered" evidence="3">
    <location>
        <begin position="1"/>
        <end position="23"/>
    </location>
</feature>
<feature type="compositionally biased region" description="Basic residues" evidence="3">
    <location>
        <begin position="1"/>
        <end position="16"/>
    </location>
</feature>
<feature type="sequence conflict" description="In Ref. 3; BX824196." evidence="4" ref="3">
    <original>G</original>
    <variation>A</variation>
    <location>
        <position position="339"/>
    </location>
</feature>
<protein>
    <recommendedName>
        <fullName>WAT1-related protein At3g18200</fullName>
    </recommendedName>
</protein>
<comment type="subcellular location">
    <subcellularLocation>
        <location evidence="1">Membrane</location>
        <topology evidence="4">Multi-pass membrane protein</topology>
    </subcellularLocation>
</comment>
<comment type="alternative products">
    <event type="alternative splicing"/>
    <isoform>
        <id>Q9LV20-1</id>
        <name>1</name>
        <sequence type="displayed"/>
    </isoform>
    <text>Additional isoforms seem to exist.</text>
</comment>
<comment type="similarity">
    <text evidence="4">Belongs to the drug/metabolite transporter (DMT) superfamily. Plant drug/metabolite exporter (P-DME) (TC 2.A.7.4) family.</text>
</comment>
<comment type="sequence caution" evidence="4">
    <conflict type="frameshift">
        <sequence resource="EMBL" id="BX824196"/>
    </conflict>
</comment>
<gene>
    <name type="ordered locus">At3g18200</name>
    <name type="ORF">MRC8.20</name>
</gene>
<keyword id="KW-0025">Alternative splicing</keyword>
<keyword id="KW-0472">Membrane</keyword>
<keyword id="KW-1185">Reference proteome</keyword>
<keyword id="KW-0677">Repeat</keyword>
<keyword id="KW-0812">Transmembrane</keyword>
<keyword id="KW-1133">Transmembrane helix</keyword>
<name>WTR17_ARATH</name>
<proteinExistence type="evidence at transcript level"/>